<evidence type="ECO:0000250" key="1"/>
<evidence type="ECO:0000255" key="2"/>
<evidence type="ECO:0000256" key="3">
    <source>
        <dbReference type="SAM" id="MobiDB-lite"/>
    </source>
</evidence>
<evidence type="ECO:0000269" key="4">
    <source>
    </source>
</evidence>
<evidence type="ECO:0000269" key="5">
    <source>
    </source>
</evidence>
<evidence type="ECO:0000305" key="6"/>
<evidence type="ECO:0007829" key="7">
    <source>
        <dbReference type="PDB" id="8EUP"/>
    </source>
</evidence>
<evidence type="ECO:0007829" key="8">
    <source>
        <dbReference type="PDB" id="8EUY"/>
    </source>
</evidence>
<evidence type="ECO:0007829" key="9">
    <source>
        <dbReference type="PDB" id="8EV3"/>
    </source>
</evidence>
<accession>O13802</accession>
<dbReference type="EMBL" id="CU329670">
    <property type="protein sequence ID" value="CAB11214.1"/>
    <property type="molecule type" value="Genomic_DNA"/>
</dbReference>
<dbReference type="PIR" id="T37871">
    <property type="entry name" value="T37871"/>
</dbReference>
<dbReference type="RefSeq" id="NP_593575.1">
    <property type="nucleotide sequence ID" value="NM_001019007.2"/>
</dbReference>
<dbReference type="PDB" id="8ESQ">
    <property type="method" value="EM"/>
    <property type="resolution" value="2.80 A"/>
    <property type="chains" value="J=1-333"/>
</dbReference>
<dbReference type="PDB" id="8ESR">
    <property type="method" value="EM"/>
    <property type="resolution" value="3.20 A"/>
    <property type="chains" value="J=1-333"/>
</dbReference>
<dbReference type="PDB" id="8ETH">
    <property type="method" value="EM"/>
    <property type="resolution" value="3.80 A"/>
    <property type="chains" value="J=1-333"/>
</dbReference>
<dbReference type="PDB" id="8ETI">
    <property type="method" value="EM"/>
    <property type="resolution" value="3.70 A"/>
    <property type="chains" value="J=1-333"/>
</dbReference>
<dbReference type="PDB" id="8EUP">
    <property type="method" value="EM"/>
    <property type="resolution" value="3.10 A"/>
    <property type="chains" value="J=1-333"/>
</dbReference>
<dbReference type="PDB" id="8EUY">
    <property type="method" value="EM"/>
    <property type="resolution" value="3.00 A"/>
    <property type="chains" value="J=1-333"/>
</dbReference>
<dbReference type="PDB" id="8EV3">
    <property type="method" value="EM"/>
    <property type="resolution" value="3.00 A"/>
    <property type="chains" value="J=1-333"/>
</dbReference>
<dbReference type="PDBsum" id="8ESQ"/>
<dbReference type="PDBsum" id="8ESR"/>
<dbReference type="PDBsum" id="8ETH"/>
<dbReference type="PDBsum" id="8ETI"/>
<dbReference type="PDBsum" id="8EUP"/>
<dbReference type="PDBsum" id="8EUY"/>
<dbReference type="PDBsum" id="8EV3"/>
<dbReference type="SMR" id="O13802"/>
<dbReference type="BioGRID" id="278597">
    <property type="interactions" value="16"/>
</dbReference>
<dbReference type="FunCoup" id="O13802">
    <property type="interactions" value="585"/>
</dbReference>
<dbReference type="IntAct" id="O13802">
    <property type="interactions" value="4"/>
</dbReference>
<dbReference type="MINT" id="O13802"/>
<dbReference type="STRING" id="284812.O13802"/>
<dbReference type="iPTMnet" id="O13802"/>
<dbReference type="PaxDb" id="4896-SPAC17H9.05.1"/>
<dbReference type="EnsemblFungi" id="SPAC17H9.05.1">
    <property type="protein sequence ID" value="SPAC17H9.05.1:pep"/>
    <property type="gene ID" value="SPAC17H9.05"/>
</dbReference>
<dbReference type="GeneID" id="2542121"/>
<dbReference type="KEGG" id="spo:2542121"/>
<dbReference type="PomBase" id="SPAC17H9.05">
    <property type="gene designation" value="ebp2"/>
</dbReference>
<dbReference type="VEuPathDB" id="FungiDB:SPAC17H9.05"/>
<dbReference type="eggNOG" id="KOG3080">
    <property type="taxonomic scope" value="Eukaryota"/>
</dbReference>
<dbReference type="HOGENOM" id="CLU_036007_2_0_1"/>
<dbReference type="InParanoid" id="O13802"/>
<dbReference type="OMA" id="DAHKGRD"/>
<dbReference type="PhylomeDB" id="O13802"/>
<dbReference type="Reactome" id="R-SPO-6791226">
    <property type="pathway name" value="Major pathway of rRNA processing in the nucleolus and cytosol"/>
</dbReference>
<dbReference type="PRO" id="PR:O13802"/>
<dbReference type="Proteomes" id="UP000002485">
    <property type="component" value="Chromosome I"/>
</dbReference>
<dbReference type="GO" id="GO:0034399">
    <property type="term" value="C:nuclear periphery"/>
    <property type="evidence" value="ECO:0000318"/>
    <property type="project" value="GO_Central"/>
</dbReference>
<dbReference type="GO" id="GO:0005730">
    <property type="term" value="C:nucleolus"/>
    <property type="evidence" value="ECO:0007005"/>
    <property type="project" value="PomBase"/>
</dbReference>
<dbReference type="GO" id="GO:0005634">
    <property type="term" value="C:nucleus"/>
    <property type="evidence" value="ECO:0007005"/>
    <property type="project" value="PomBase"/>
</dbReference>
<dbReference type="GO" id="GO:0030684">
    <property type="term" value="C:preribosome"/>
    <property type="evidence" value="ECO:0000314"/>
    <property type="project" value="PomBase"/>
</dbReference>
<dbReference type="GO" id="GO:0030687">
    <property type="term" value="C:preribosome, large subunit precursor"/>
    <property type="evidence" value="ECO:0000318"/>
    <property type="project" value="GO_Central"/>
</dbReference>
<dbReference type="GO" id="GO:0042273">
    <property type="term" value="P:ribosomal large subunit biogenesis"/>
    <property type="evidence" value="ECO:0000353"/>
    <property type="project" value="PomBase"/>
</dbReference>
<dbReference type="GO" id="GO:0006364">
    <property type="term" value="P:rRNA processing"/>
    <property type="evidence" value="ECO:0000318"/>
    <property type="project" value="GO_Central"/>
</dbReference>
<dbReference type="InterPro" id="IPR008610">
    <property type="entry name" value="Ebp2"/>
</dbReference>
<dbReference type="PANTHER" id="PTHR13028">
    <property type="entry name" value="RRNA PROCESSING PROTEIN EBNA1-BINDING PROTEIN-RELATED"/>
    <property type="match status" value="1"/>
</dbReference>
<dbReference type="PANTHER" id="PTHR13028:SF0">
    <property type="entry name" value="RRNA-PROCESSING PROTEIN EBP2-RELATED"/>
    <property type="match status" value="1"/>
</dbReference>
<dbReference type="Pfam" id="PF05890">
    <property type="entry name" value="Ebp2"/>
    <property type="match status" value="1"/>
</dbReference>
<reference key="1">
    <citation type="journal article" date="2002" name="Nature">
        <title>The genome sequence of Schizosaccharomyces pombe.</title>
        <authorList>
            <person name="Wood V."/>
            <person name="Gwilliam R."/>
            <person name="Rajandream M.A."/>
            <person name="Lyne M.H."/>
            <person name="Lyne R."/>
            <person name="Stewart A."/>
            <person name="Sgouros J.G."/>
            <person name="Peat N."/>
            <person name="Hayles J."/>
            <person name="Baker S.G."/>
            <person name="Basham D."/>
            <person name="Bowman S."/>
            <person name="Brooks K."/>
            <person name="Brown D."/>
            <person name="Brown S."/>
            <person name="Chillingworth T."/>
            <person name="Churcher C.M."/>
            <person name="Collins M."/>
            <person name="Connor R."/>
            <person name="Cronin A."/>
            <person name="Davis P."/>
            <person name="Feltwell T."/>
            <person name="Fraser A."/>
            <person name="Gentles S."/>
            <person name="Goble A."/>
            <person name="Hamlin N."/>
            <person name="Harris D.E."/>
            <person name="Hidalgo J."/>
            <person name="Hodgson G."/>
            <person name="Holroyd S."/>
            <person name="Hornsby T."/>
            <person name="Howarth S."/>
            <person name="Huckle E.J."/>
            <person name="Hunt S."/>
            <person name="Jagels K."/>
            <person name="James K.D."/>
            <person name="Jones L."/>
            <person name="Jones M."/>
            <person name="Leather S."/>
            <person name="McDonald S."/>
            <person name="McLean J."/>
            <person name="Mooney P."/>
            <person name="Moule S."/>
            <person name="Mungall K.L."/>
            <person name="Murphy L.D."/>
            <person name="Niblett D."/>
            <person name="Odell C."/>
            <person name="Oliver K."/>
            <person name="O'Neil S."/>
            <person name="Pearson D."/>
            <person name="Quail M.A."/>
            <person name="Rabbinowitsch E."/>
            <person name="Rutherford K.M."/>
            <person name="Rutter S."/>
            <person name="Saunders D."/>
            <person name="Seeger K."/>
            <person name="Sharp S."/>
            <person name="Skelton J."/>
            <person name="Simmonds M.N."/>
            <person name="Squares R."/>
            <person name="Squares S."/>
            <person name="Stevens K."/>
            <person name="Taylor K."/>
            <person name="Taylor R.G."/>
            <person name="Tivey A."/>
            <person name="Walsh S.V."/>
            <person name="Warren T."/>
            <person name="Whitehead S."/>
            <person name="Woodward J.R."/>
            <person name="Volckaert G."/>
            <person name="Aert R."/>
            <person name="Robben J."/>
            <person name="Grymonprez B."/>
            <person name="Weltjens I."/>
            <person name="Vanstreels E."/>
            <person name="Rieger M."/>
            <person name="Schaefer M."/>
            <person name="Mueller-Auer S."/>
            <person name="Gabel C."/>
            <person name="Fuchs M."/>
            <person name="Duesterhoeft A."/>
            <person name="Fritzc C."/>
            <person name="Holzer E."/>
            <person name="Moestl D."/>
            <person name="Hilbert H."/>
            <person name="Borzym K."/>
            <person name="Langer I."/>
            <person name="Beck A."/>
            <person name="Lehrach H."/>
            <person name="Reinhardt R."/>
            <person name="Pohl T.M."/>
            <person name="Eger P."/>
            <person name="Zimmermann W."/>
            <person name="Wedler H."/>
            <person name="Wambutt R."/>
            <person name="Purnelle B."/>
            <person name="Goffeau A."/>
            <person name="Cadieu E."/>
            <person name="Dreano S."/>
            <person name="Gloux S."/>
            <person name="Lelaure V."/>
            <person name="Mottier S."/>
            <person name="Galibert F."/>
            <person name="Aves S.J."/>
            <person name="Xiang Z."/>
            <person name="Hunt C."/>
            <person name="Moore K."/>
            <person name="Hurst S.M."/>
            <person name="Lucas M."/>
            <person name="Rochet M."/>
            <person name="Gaillardin C."/>
            <person name="Tallada V.A."/>
            <person name="Garzon A."/>
            <person name="Thode G."/>
            <person name="Daga R.R."/>
            <person name="Cruzado L."/>
            <person name="Jimenez J."/>
            <person name="Sanchez M."/>
            <person name="del Rey F."/>
            <person name="Benito J."/>
            <person name="Dominguez A."/>
            <person name="Revuelta J.L."/>
            <person name="Moreno S."/>
            <person name="Armstrong J."/>
            <person name="Forsburg S.L."/>
            <person name="Cerutti L."/>
            <person name="Lowe T."/>
            <person name="McCombie W.R."/>
            <person name="Paulsen I."/>
            <person name="Potashkin J."/>
            <person name="Shpakovski G.V."/>
            <person name="Ussery D."/>
            <person name="Barrell B.G."/>
            <person name="Nurse P."/>
        </authorList>
    </citation>
    <scope>NUCLEOTIDE SEQUENCE [LARGE SCALE GENOMIC DNA]</scope>
    <source>
        <strain>972 / ATCC 24843</strain>
    </source>
</reference>
<reference key="2">
    <citation type="journal article" date="2004" name="Mol. Genet. Genomics">
        <title>Two-hybrid search for proteins that interact with Sad1 and Kms1, two membrane-bound components of the spindle pole body in fission yeast.</title>
        <authorList>
            <person name="Miki F."/>
            <person name="Kurabayashi A."/>
            <person name="Tange Y."/>
            <person name="Okazaki K."/>
            <person name="Shimanuki M."/>
            <person name="Niwa O."/>
        </authorList>
    </citation>
    <scope>INTERACTION WITH SAD1</scope>
    <scope>SUBCELLULAR LOCATION</scope>
</reference>
<reference key="3">
    <citation type="journal article" date="2008" name="J. Proteome Res.">
        <title>Phosphoproteome analysis of fission yeast.</title>
        <authorList>
            <person name="Wilson-Grady J.T."/>
            <person name="Villen J."/>
            <person name="Gygi S.P."/>
        </authorList>
    </citation>
    <scope>PHOSPHORYLATION [LARGE SCALE ANALYSIS] AT SER-272</scope>
    <scope>IDENTIFICATION BY MASS SPECTROMETRY</scope>
</reference>
<keyword id="KW-0002">3D-structure</keyword>
<keyword id="KW-0175">Coiled coil</keyword>
<keyword id="KW-0539">Nucleus</keyword>
<keyword id="KW-0597">Phosphoprotein</keyword>
<keyword id="KW-1185">Reference proteome</keyword>
<keyword id="KW-0690">Ribosome biogenesis</keyword>
<comment type="function">
    <text evidence="1">Required for the processing of the 27S pre-rRNA.</text>
</comment>
<comment type="subunit">
    <text evidence="4">Interacts with sad1.</text>
</comment>
<comment type="subcellular location">
    <subcellularLocation>
        <location evidence="4">Nucleus</location>
        <location evidence="4">Nucleolus</location>
    </subcellularLocation>
</comment>
<comment type="similarity">
    <text evidence="6">Belongs to the EBP2 family.</text>
</comment>
<sequence length="333" mass="37819">MAGIESKQRRAQKKAAKAAMKEKKNKESNESSTSVEALNEKEMINTIKSPIIETADTADQENESEGSDEVELSDLEGIELEEDADLIRKRKLAINNTVALENIYERIKYPDDISFVENQAVTTKEPIIIENVEDDLARELAFYKQGVSSVKAAFAKLREANVLISRPHDYFAEMLKSDDHMEKVRQELIKEATAKKLSQQAKKQRELKKFGKQVQLAKQEERQREKKETLEKINLLKRKHTGGDLTTEDDFDIALSSASADTFKKGSRSTKSRPQPNPKRQKKNEKYGFGGPKHRSKSNDLDSLAATEFGRKGLKNIKSKKRPGKARREKARK</sequence>
<feature type="chain" id="PRO_0000119999" description="Probable rRNA-processing protein ebp2">
    <location>
        <begin position="1"/>
        <end position="333"/>
    </location>
</feature>
<feature type="region of interest" description="Disordered" evidence="3">
    <location>
        <begin position="1"/>
        <end position="75"/>
    </location>
</feature>
<feature type="region of interest" description="Disordered" evidence="3">
    <location>
        <begin position="203"/>
        <end position="227"/>
    </location>
</feature>
<feature type="region of interest" description="Disordered" evidence="3">
    <location>
        <begin position="261"/>
        <end position="333"/>
    </location>
</feature>
<feature type="coiled-coil region" evidence="2">
    <location>
        <begin position="212"/>
        <end position="240"/>
    </location>
</feature>
<feature type="compositionally biased region" description="Basic and acidic residues" evidence="3">
    <location>
        <begin position="19"/>
        <end position="29"/>
    </location>
</feature>
<feature type="compositionally biased region" description="Acidic residues" evidence="3">
    <location>
        <begin position="56"/>
        <end position="75"/>
    </location>
</feature>
<feature type="compositionally biased region" description="Basic and acidic residues" evidence="3">
    <location>
        <begin position="218"/>
        <end position="227"/>
    </location>
</feature>
<feature type="compositionally biased region" description="Basic residues" evidence="3">
    <location>
        <begin position="312"/>
        <end position="333"/>
    </location>
</feature>
<feature type="modified residue" description="Phosphoserine" evidence="5">
    <location>
        <position position="272"/>
    </location>
</feature>
<feature type="helix" evidence="8">
    <location>
        <begin position="97"/>
        <end position="106"/>
    </location>
</feature>
<feature type="helix" evidence="8">
    <location>
        <begin position="115"/>
        <end position="118"/>
    </location>
</feature>
<feature type="strand" evidence="7">
    <location>
        <begin position="120"/>
        <end position="122"/>
    </location>
</feature>
<feature type="helix" evidence="8">
    <location>
        <begin position="135"/>
        <end position="159"/>
    </location>
</feature>
<feature type="strand" evidence="7">
    <location>
        <begin position="160"/>
        <end position="162"/>
    </location>
</feature>
<feature type="strand" evidence="9">
    <location>
        <begin position="168"/>
        <end position="170"/>
    </location>
</feature>
<feature type="strand" evidence="8">
    <location>
        <begin position="174"/>
        <end position="176"/>
    </location>
</feature>
<feature type="helix" evidence="8">
    <location>
        <begin position="178"/>
        <end position="181"/>
    </location>
</feature>
<proteinExistence type="evidence at protein level"/>
<organism>
    <name type="scientific">Schizosaccharomyces pombe (strain 972 / ATCC 24843)</name>
    <name type="common">Fission yeast</name>
    <dbReference type="NCBI Taxonomy" id="284812"/>
    <lineage>
        <taxon>Eukaryota</taxon>
        <taxon>Fungi</taxon>
        <taxon>Dikarya</taxon>
        <taxon>Ascomycota</taxon>
        <taxon>Taphrinomycotina</taxon>
        <taxon>Schizosaccharomycetes</taxon>
        <taxon>Schizosaccharomycetales</taxon>
        <taxon>Schizosaccharomycetaceae</taxon>
        <taxon>Schizosaccharomyces</taxon>
    </lineage>
</organism>
<name>EBP2_SCHPO</name>
<gene>
    <name type="primary">ebp2</name>
    <name type="ORF">SPAC17H9.05</name>
</gene>
<protein>
    <recommendedName>
        <fullName>Probable rRNA-processing protein ebp2</fullName>
    </recommendedName>
</protein>